<feature type="chain" id="PRO_0000180923" description="Flagellar motor switch protein FliM">
    <location>
        <begin position="1"/>
        <end position="352"/>
    </location>
</feature>
<accession>Q57511</accession>
<gene>
    <name type="primary">fliM</name>
    <name type="ordered locus">BB_0278</name>
</gene>
<keyword id="KW-0975">Bacterial flagellum</keyword>
<keyword id="KW-0997">Cell inner membrane</keyword>
<keyword id="KW-1003">Cell membrane</keyword>
<keyword id="KW-0145">Chemotaxis</keyword>
<keyword id="KW-0283">Flagellar rotation</keyword>
<keyword id="KW-0472">Membrane</keyword>
<keyword id="KW-1185">Reference proteome</keyword>
<sequence length="352" mass="39284">MANNPGALSQDDIDSLLESINSSESLSLDESLSNVISSPTGKKQKVKVYDFKRPDKFSKEQVRTVSSFHEAFARYTTTSLSALLRKMVHVHVASVDQLTYEEFIRSIPNPTTLAIINMDPLKGSAIFEVDPTIAFAIVDRLFGGDGDTIKDKSRDLTEIEQSVMESVIIRILANMREAWSQVVDLRPRFGHIEVNPQFAQIVPPTEMIILVTLEVKIGKVEGLMNFCLPYITIEPIVSKLSTRYWHSLIGVGTTSENLDALREKLENTAMPLVAEIGEVKLKVREILSLDKGDVLNLESSLINKDLTLKVGTKEKFKCRMGLMGNKVSVQITEKIGDIKGFDLLKELTEEVE</sequence>
<protein>
    <recommendedName>
        <fullName>Flagellar motor switch protein FliM</fullName>
    </recommendedName>
</protein>
<evidence type="ECO:0000250" key="1"/>
<evidence type="ECO:0000305" key="2"/>
<comment type="function">
    <text evidence="1">FliM is one of three proteins (FliG, FliN, FliM) that forms the rotor-mounted switch complex (C ring), located at the base of the basal body. This complex interacts with the CheY and CheZ chemotaxis proteins, in addition to contacting components of the motor that determine the direction of flagellar rotation (By similarity).</text>
</comment>
<comment type="subcellular location">
    <subcellularLocation>
        <location evidence="1">Cell inner membrane</location>
        <topology evidence="1">Peripheral membrane protein</topology>
    </subcellularLocation>
    <subcellularLocation>
        <location evidence="1">Bacterial flagellum basal body</location>
    </subcellularLocation>
</comment>
<comment type="similarity">
    <text evidence="2">Belongs to the FliM family.</text>
</comment>
<dbReference type="EMBL" id="U43739">
    <property type="protein sequence ID" value="AAA85602.1"/>
    <property type="molecule type" value="Genomic_DNA"/>
</dbReference>
<dbReference type="EMBL" id="L75945">
    <property type="protein sequence ID" value="AAB58965.1"/>
    <property type="molecule type" value="Genomic_DNA"/>
</dbReference>
<dbReference type="EMBL" id="AE000783">
    <property type="protein sequence ID" value="AAC66670.1"/>
    <property type="molecule type" value="Genomic_DNA"/>
</dbReference>
<dbReference type="PIR" id="F70134">
    <property type="entry name" value="F70134"/>
</dbReference>
<dbReference type="RefSeq" id="NP_212412.1">
    <property type="nucleotide sequence ID" value="NC_001318.1"/>
</dbReference>
<dbReference type="RefSeq" id="WP_002656446.1">
    <property type="nucleotide sequence ID" value="NC_001318.1"/>
</dbReference>
<dbReference type="SMR" id="Q57511"/>
<dbReference type="STRING" id="224326.BB_0278"/>
<dbReference type="PaxDb" id="224326-BB_0278"/>
<dbReference type="EnsemblBacteria" id="AAC66670">
    <property type="protein sequence ID" value="AAC66670"/>
    <property type="gene ID" value="BB_0278"/>
</dbReference>
<dbReference type="GeneID" id="77265119"/>
<dbReference type="KEGG" id="bbu:BB_0278"/>
<dbReference type="PATRIC" id="fig|224326.49.peg.677"/>
<dbReference type="HOGENOM" id="CLU_052646_0_0_12"/>
<dbReference type="OrthoDB" id="9806941at2"/>
<dbReference type="Proteomes" id="UP000001807">
    <property type="component" value="Chromosome"/>
</dbReference>
<dbReference type="GO" id="GO:0009425">
    <property type="term" value="C:bacterial-type flagellum basal body"/>
    <property type="evidence" value="ECO:0007669"/>
    <property type="project" value="UniProtKB-SubCell"/>
</dbReference>
<dbReference type="GO" id="GO:0005886">
    <property type="term" value="C:plasma membrane"/>
    <property type="evidence" value="ECO:0007669"/>
    <property type="project" value="UniProtKB-SubCell"/>
</dbReference>
<dbReference type="GO" id="GO:0003774">
    <property type="term" value="F:cytoskeletal motor activity"/>
    <property type="evidence" value="ECO:0007669"/>
    <property type="project" value="InterPro"/>
</dbReference>
<dbReference type="GO" id="GO:0071978">
    <property type="term" value="P:bacterial-type flagellum-dependent swarming motility"/>
    <property type="evidence" value="ECO:0007669"/>
    <property type="project" value="TreeGrafter"/>
</dbReference>
<dbReference type="GO" id="GO:0050918">
    <property type="term" value="P:positive chemotaxis"/>
    <property type="evidence" value="ECO:0007669"/>
    <property type="project" value="TreeGrafter"/>
</dbReference>
<dbReference type="CDD" id="cd17908">
    <property type="entry name" value="FliM"/>
    <property type="match status" value="1"/>
</dbReference>
<dbReference type="Gene3D" id="3.40.1550.10">
    <property type="entry name" value="CheC-like"/>
    <property type="match status" value="1"/>
</dbReference>
<dbReference type="Gene3D" id="2.30.330.10">
    <property type="entry name" value="SpoA-like"/>
    <property type="match status" value="1"/>
</dbReference>
<dbReference type="InterPro" id="IPR028976">
    <property type="entry name" value="CheC-like_sf"/>
</dbReference>
<dbReference type="InterPro" id="IPR001689">
    <property type="entry name" value="Flag_FliM"/>
</dbReference>
<dbReference type="InterPro" id="IPR001543">
    <property type="entry name" value="FliN-like_C"/>
</dbReference>
<dbReference type="InterPro" id="IPR036429">
    <property type="entry name" value="SpoA-like_sf"/>
</dbReference>
<dbReference type="NCBIfam" id="TIGR01397">
    <property type="entry name" value="fliM_switch"/>
    <property type="match status" value="1"/>
</dbReference>
<dbReference type="PANTHER" id="PTHR30034">
    <property type="entry name" value="FLAGELLAR MOTOR SWITCH PROTEIN FLIM"/>
    <property type="match status" value="1"/>
</dbReference>
<dbReference type="PANTHER" id="PTHR30034:SF6">
    <property type="entry name" value="YOP PROTEINS TRANSLOCATION PROTEIN Q"/>
    <property type="match status" value="1"/>
</dbReference>
<dbReference type="Pfam" id="PF02154">
    <property type="entry name" value="FliM"/>
    <property type="match status" value="1"/>
</dbReference>
<dbReference type="Pfam" id="PF01052">
    <property type="entry name" value="FliMN_C"/>
    <property type="match status" value="1"/>
</dbReference>
<dbReference type="PIRSF" id="PIRSF002888">
    <property type="entry name" value="FliM"/>
    <property type="match status" value="1"/>
</dbReference>
<dbReference type="PRINTS" id="PR00955">
    <property type="entry name" value="FLGMOTORFLIM"/>
</dbReference>
<dbReference type="SUPFAM" id="SSF103039">
    <property type="entry name" value="CheC-like"/>
    <property type="match status" value="1"/>
</dbReference>
<dbReference type="SUPFAM" id="SSF101801">
    <property type="entry name" value="Surface presentation of antigens (SPOA)"/>
    <property type="match status" value="1"/>
</dbReference>
<reference key="1">
    <citation type="submission" date="1995-12" db="EMBL/GenBank/DDBJ databases">
        <authorList>
            <person name="Dunn J.J."/>
            <person name="Butler-Loffredo L."/>
            <person name="Kieleczawa J."/>
            <person name="Medalle J."/>
            <person name="Luft B.J."/>
        </authorList>
    </citation>
    <scope>NUCLEOTIDE SEQUENCE [GENOMIC DNA]</scope>
    <source>
        <strain>ATCC 35210 / DSM 4680 / CIP 102532 / B31</strain>
    </source>
</reference>
<reference key="2">
    <citation type="submission" date="1996-02" db="EMBL/GenBank/DDBJ databases">
        <authorList>
            <person name="Ge Y."/>
            <person name="Charon N.W."/>
        </authorList>
    </citation>
    <scope>NUCLEOTIDE SEQUENCE [GENOMIC DNA]</scope>
    <source>
        <strain>212</strain>
    </source>
</reference>
<reference key="3">
    <citation type="journal article" date="1997" name="Nature">
        <title>Genomic sequence of a Lyme disease spirochaete, Borrelia burgdorferi.</title>
        <authorList>
            <person name="Fraser C.M."/>
            <person name="Casjens S."/>
            <person name="Huang W.M."/>
            <person name="Sutton G.G."/>
            <person name="Clayton R.A."/>
            <person name="Lathigra R."/>
            <person name="White O."/>
            <person name="Ketchum K.A."/>
            <person name="Dodson R.J."/>
            <person name="Hickey E.K."/>
            <person name="Gwinn M.L."/>
            <person name="Dougherty B.A."/>
            <person name="Tomb J.-F."/>
            <person name="Fleischmann R.D."/>
            <person name="Richardson D.L."/>
            <person name="Peterson J.D."/>
            <person name="Kerlavage A.R."/>
            <person name="Quackenbush J."/>
            <person name="Salzberg S.L."/>
            <person name="Hanson M."/>
            <person name="van Vugt R."/>
            <person name="Palmer N."/>
            <person name="Adams M.D."/>
            <person name="Gocayne J.D."/>
            <person name="Weidman J.F."/>
            <person name="Utterback T.R."/>
            <person name="Watthey L."/>
            <person name="McDonald L.A."/>
            <person name="Artiach P."/>
            <person name="Bowman C."/>
            <person name="Garland S.A."/>
            <person name="Fujii C."/>
            <person name="Cotton M.D."/>
            <person name="Horst K."/>
            <person name="Roberts K.M."/>
            <person name="Hatch B."/>
            <person name="Smith H.O."/>
            <person name="Venter J.C."/>
        </authorList>
    </citation>
    <scope>NUCLEOTIDE SEQUENCE [LARGE SCALE GENOMIC DNA]</scope>
    <source>
        <strain>ATCC 35210 / DSM 4680 / CIP 102532 / B31</strain>
    </source>
</reference>
<proteinExistence type="inferred from homology"/>
<organism>
    <name type="scientific">Borreliella burgdorferi (strain ATCC 35210 / DSM 4680 / CIP 102532 / B31)</name>
    <name type="common">Borrelia burgdorferi</name>
    <dbReference type="NCBI Taxonomy" id="224326"/>
    <lineage>
        <taxon>Bacteria</taxon>
        <taxon>Pseudomonadati</taxon>
        <taxon>Spirochaetota</taxon>
        <taxon>Spirochaetia</taxon>
        <taxon>Spirochaetales</taxon>
        <taxon>Borreliaceae</taxon>
        <taxon>Borreliella</taxon>
    </lineage>
</organism>
<name>FLIM_BORBU</name>